<reference key="1">
    <citation type="journal article" date="2002" name="J. Bacteriol.">
        <title>Whole-genome comparison of Mycobacterium tuberculosis clinical and laboratory strains.</title>
        <authorList>
            <person name="Fleischmann R.D."/>
            <person name="Alland D."/>
            <person name="Eisen J.A."/>
            <person name="Carpenter L."/>
            <person name="White O."/>
            <person name="Peterson J.D."/>
            <person name="DeBoy R.T."/>
            <person name="Dodson R.J."/>
            <person name="Gwinn M.L."/>
            <person name="Haft D.H."/>
            <person name="Hickey E.K."/>
            <person name="Kolonay J.F."/>
            <person name="Nelson W.C."/>
            <person name="Umayam L.A."/>
            <person name="Ermolaeva M.D."/>
            <person name="Salzberg S.L."/>
            <person name="Delcher A."/>
            <person name="Utterback T.R."/>
            <person name="Weidman J.F."/>
            <person name="Khouri H.M."/>
            <person name="Gill J."/>
            <person name="Mikula A."/>
            <person name="Bishai W."/>
            <person name="Jacobs W.R. Jr."/>
            <person name="Venter J.C."/>
            <person name="Fraser C.M."/>
        </authorList>
    </citation>
    <scope>NUCLEOTIDE SEQUENCE [LARGE SCALE GENOMIC DNA]</scope>
    <source>
        <strain>CDC 1551 / Oshkosh</strain>
    </source>
</reference>
<name>PARB_MYCTO</name>
<comment type="function">
    <text evidence="1">Involved in chromosome partition. Localize to both poles of the predivisional cell following completion of DNA replication. Binds to the DNA origin of replication (By similarity).</text>
</comment>
<comment type="similarity">
    <text evidence="3">Belongs to the ParB family.</text>
</comment>
<dbReference type="EMBL" id="AE000516">
    <property type="protein sequence ID" value="AAK48402.1"/>
    <property type="molecule type" value="Genomic_DNA"/>
</dbReference>
<dbReference type="PIR" id="E70851">
    <property type="entry name" value="E70851"/>
</dbReference>
<dbReference type="PIR" id="F70851">
    <property type="entry name" value="F70851"/>
</dbReference>
<dbReference type="RefSeq" id="WP_003400175.1">
    <property type="nucleotide sequence ID" value="NZ_KK341228.1"/>
</dbReference>
<dbReference type="SMR" id="P9WIJ8"/>
<dbReference type="KEGG" id="mtc:MT4036"/>
<dbReference type="PATRIC" id="fig|83331.31.peg.4342"/>
<dbReference type="HOGENOM" id="CLU_023853_0_0_11"/>
<dbReference type="Proteomes" id="UP000001020">
    <property type="component" value="Chromosome"/>
</dbReference>
<dbReference type="GO" id="GO:0005694">
    <property type="term" value="C:chromosome"/>
    <property type="evidence" value="ECO:0007669"/>
    <property type="project" value="TreeGrafter"/>
</dbReference>
<dbReference type="GO" id="GO:0003677">
    <property type="term" value="F:DNA binding"/>
    <property type="evidence" value="ECO:0007669"/>
    <property type="project" value="UniProtKB-KW"/>
</dbReference>
<dbReference type="GO" id="GO:0007059">
    <property type="term" value="P:chromosome segregation"/>
    <property type="evidence" value="ECO:0007669"/>
    <property type="project" value="UniProtKB-KW"/>
</dbReference>
<dbReference type="GO" id="GO:0045881">
    <property type="term" value="P:positive regulation of sporulation resulting in formation of a cellular spore"/>
    <property type="evidence" value="ECO:0007669"/>
    <property type="project" value="TreeGrafter"/>
</dbReference>
<dbReference type="CDD" id="cd16393">
    <property type="entry name" value="SPO0J_N"/>
    <property type="match status" value="1"/>
</dbReference>
<dbReference type="FunFam" id="1.10.10.2830:FF:000001">
    <property type="entry name" value="Chromosome partitioning protein ParB"/>
    <property type="match status" value="1"/>
</dbReference>
<dbReference type="FunFam" id="3.90.1530.30:FF:000001">
    <property type="entry name" value="Chromosome partitioning protein ParB"/>
    <property type="match status" value="1"/>
</dbReference>
<dbReference type="Gene3D" id="1.10.10.2830">
    <property type="match status" value="1"/>
</dbReference>
<dbReference type="Gene3D" id="3.90.1530.30">
    <property type="match status" value="1"/>
</dbReference>
<dbReference type="InterPro" id="IPR050336">
    <property type="entry name" value="Chromosome_partition/occlusion"/>
</dbReference>
<dbReference type="InterPro" id="IPR041468">
    <property type="entry name" value="HTH_ParB/Spo0J"/>
</dbReference>
<dbReference type="InterPro" id="IPR004437">
    <property type="entry name" value="ParB/RepB/Spo0J"/>
</dbReference>
<dbReference type="InterPro" id="IPR003115">
    <property type="entry name" value="ParB/Sulfiredoxin_dom"/>
</dbReference>
<dbReference type="InterPro" id="IPR036086">
    <property type="entry name" value="ParB/Sulfiredoxin_sf"/>
</dbReference>
<dbReference type="InterPro" id="IPR057240">
    <property type="entry name" value="ParB_dimer_C"/>
</dbReference>
<dbReference type="NCBIfam" id="TIGR00180">
    <property type="entry name" value="parB_part"/>
    <property type="match status" value="1"/>
</dbReference>
<dbReference type="PANTHER" id="PTHR33375">
    <property type="entry name" value="CHROMOSOME-PARTITIONING PROTEIN PARB-RELATED"/>
    <property type="match status" value="1"/>
</dbReference>
<dbReference type="PANTHER" id="PTHR33375:SF1">
    <property type="entry name" value="CHROMOSOME-PARTITIONING PROTEIN PARB-RELATED"/>
    <property type="match status" value="1"/>
</dbReference>
<dbReference type="Pfam" id="PF17762">
    <property type="entry name" value="HTH_ParB"/>
    <property type="match status" value="1"/>
</dbReference>
<dbReference type="Pfam" id="PF23552">
    <property type="entry name" value="ParB_dimer"/>
    <property type="match status" value="1"/>
</dbReference>
<dbReference type="Pfam" id="PF02195">
    <property type="entry name" value="ParBc"/>
    <property type="match status" value="1"/>
</dbReference>
<dbReference type="SMART" id="SM00470">
    <property type="entry name" value="ParB"/>
    <property type="match status" value="1"/>
</dbReference>
<dbReference type="SUPFAM" id="SSF109709">
    <property type="entry name" value="KorB DNA-binding domain-like"/>
    <property type="match status" value="1"/>
</dbReference>
<dbReference type="SUPFAM" id="SSF110849">
    <property type="entry name" value="ParB/Sulfiredoxin"/>
    <property type="match status" value="1"/>
</dbReference>
<accession>P9WIJ8</accession>
<accession>L0TH09</accession>
<accession>O53595</accession>
<accession>O53596</accession>
<accession>P0A5R2</accession>
<keyword id="KW-0159">Chromosome partition</keyword>
<keyword id="KW-0238">DNA-binding</keyword>
<keyword id="KW-1185">Reference proteome</keyword>
<gene>
    <name type="primary">parB</name>
    <name type="ordered locus">MT4036</name>
</gene>
<sequence length="344" mass="37018">MTQPSRRKGGLGRGLAALIPTGPADGESGPPTLGPRMGSATADVVIGGPVPDTSVMGAIYREIPPSAIEANPRQPRQVFDEEALAELVHSIREFGLLQPIVVRSLAGSQTGVRYQIVMGERRWRAAQEAGLATIPAIVRETGDDNLLRDALLENIHRVQLNPLEEAAAYQQLLDEFGVTHDELAARIGRSRPLITNMIRLLKLPIPVQRRVAAGVLSAGHARALLSLEAGPEAQEELASRIVAEGLSVRATEETVTLANHEANRQAHHSDATTPAPPRRKPIQMPGLQDVAERLSTTFDTRVTVSLGKRKGKIVVEFGSVDDLARIVGLMTTDGRDKGLHRDAL</sequence>
<evidence type="ECO:0000250" key="1"/>
<evidence type="ECO:0000256" key="2">
    <source>
        <dbReference type="SAM" id="MobiDB-lite"/>
    </source>
</evidence>
<evidence type="ECO:0000305" key="3"/>
<protein>
    <recommendedName>
        <fullName>Probable chromosome-partitioning protein ParB</fullName>
    </recommendedName>
</protein>
<proteinExistence type="inferred from homology"/>
<organism>
    <name type="scientific">Mycobacterium tuberculosis (strain CDC 1551 / Oshkosh)</name>
    <dbReference type="NCBI Taxonomy" id="83331"/>
    <lineage>
        <taxon>Bacteria</taxon>
        <taxon>Bacillati</taxon>
        <taxon>Actinomycetota</taxon>
        <taxon>Actinomycetes</taxon>
        <taxon>Mycobacteriales</taxon>
        <taxon>Mycobacteriaceae</taxon>
        <taxon>Mycobacterium</taxon>
        <taxon>Mycobacterium tuberculosis complex</taxon>
    </lineage>
</organism>
<feature type="chain" id="PRO_0000427994" description="Probable chromosome-partitioning protein ParB">
    <location>
        <begin position="1"/>
        <end position="344"/>
    </location>
</feature>
<feature type="region of interest" description="Disordered" evidence="2">
    <location>
        <begin position="1"/>
        <end position="33"/>
    </location>
</feature>
<feature type="region of interest" description="Disordered" evidence="2">
    <location>
        <begin position="259"/>
        <end position="283"/>
    </location>
</feature>
<feature type="compositionally biased region" description="Basic residues" evidence="2">
    <location>
        <begin position="1"/>
        <end position="10"/>
    </location>
</feature>
<feature type="compositionally biased region" description="Basic and acidic residues" evidence="2">
    <location>
        <begin position="261"/>
        <end position="270"/>
    </location>
</feature>